<feature type="chain" id="PRO_0000157546" description="Large ribosomal subunit protein bL12">
    <location>
        <begin position="1"/>
        <end position="120"/>
    </location>
</feature>
<gene>
    <name evidence="1" type="primary">rplL</name>
    <name type="ordered locus">LMOf2365_0263</name>
</gene>
<sequence>MALNIEEIIASVKEASVLELNDLVKAIEEEFGVTAAAPVAVAAAGGAAAEQTEFTVELASAGDSKIKVIKVVREITGLGLKEAKELVDNAPKALKEGVAKEEAEEIKAKLEEVGANVEVK</sequence>
<name>RL7_LISMF</name>
<reference key="1">
    <citation type="journal article" date="2004" name="Nucleic Acids Res.">
        <title>Whole genome comparisons of serotype 4b and 1/2a strains of the food-borne pathogen Listeria monocytogenes reveal new insights into the core genome components of this species.</title>
        <authorList>
            <person name="Nelson K.E."/>
            <person name="Fouts D.E."/>
            <person name="Mongodin E.F."/>
            <person name="Ravel J."/>
            <person name="DeBoy R.T."/>
            <person name="Kolonay J.F."/>
            <person name="Rasko D.A."/>
            <person name="Angiuoli S.V."/>
            <person name="Gill S.R."/>
            <person name="Paulsen I.T."/>
            <person name="Peterson J.D."/>
            <person name="White O."/>
            <person name="Nelson W.C."/>
            <person name="Nierman W.C."/>
            <person name="Beanan M.J."/>
            <person name="Brinkac L.M."/>
            <person name="Daugherty S.C."/>
            <person name="Dodson R.J."/>
            <person name="Durkin A.S."/>
            <person name="Madupu R."/>
            <person name="Haft D.H."/>
            <person name="Selengut J."/>
            <person name="Van Aken S.E."/>
            <person name="Khouri H.M."/>
            <person name="Fedorova N."/>
            <person name="Forberger H.A."/>
            <person name="Tran B."/>
            <person name="Kathariou S."/>
            <person name="Wonderling L.D."/>
            <person name="Uhlich G.A."/>
            <person name="Bayles D.O."/>
            <person name="Luchansky J.B."/>
            <person name="Fraser C.M."/>
        </authorList>
    </citation>
    <scope>NUCLEOTIDE SEQUENCE [LARGE SCALE GENOMIC DNA]</scope>
    <source>
        <strain>F2365</strain>
    </source>
</reference>
<comment type="function">
    <text evidence="1">Forms part of the ribosomal stalk which helps the ribosome interact with GTP-bound translation factors. Is thus essential for accurate translation.</text>
</comment>
<comment type="subunit">
    <text evidence="1">Homodimer. Part of the ribosomal stalk of the 50S ribosomal subunit. Forms a multimeric L10(L12)X complex, where L10 forms an elongated spine to which 2 to 4 L12 dimers bind in a sequential fashion. Binds GTP-bound translation factors.</text>
</comment>
<comment type="similarity">
    <text evidence="1">Belongs to the bacterial ribosomal protein bL12 family.</text>
</comment>
<protein>
    <recommendedName>
        <fullName evidence="1">Large ribosomal subunit protein bL12</fullName>
    </recommendedName>
    <alternativeName>
        <fullName evidence="2">50S ribosomal protein L7/L12</fullName>
    </alternativeName>
</protein>
<accession>Q724G1</accession>
<keyword id="KW-0687">Ribonucleoprotein</keyword>
<keyword id="KW-0689">Ribosomal protein</keyword>
<organism>
    <name type="scientific">Listeria monocytogenes serotype 4b (strain F2365)</name>
    <dbReference type="NCBI Taxonomy" id="265669"/>
    <lineage>
        <taxon>Bacteria</taxon>
        <taxon>Bacillati</taxon>
        <taxon>Bacillota</taxon>
        <taxon>Bacilli</taxon>
        <taxon>Bacillales</taxon>
        <taxon>Listeriaceae</taxon>
        <taxon>Listeria</taxon>
    </lineage>
</organism>
<evidence type="ECO:0000255" key="1">
    <source>
        <dbReference type="HAMAP-Rule" id="MF_00368"/>
    </source>
</evidence>
<evidence type="ECO:0000305" key="2"/>
<dbReference type="EMBL" id="AE017262">
    <property type="protein sequence ID" value="AAT03050.1"/>
    <property type="molecule type" value="Genomic_DNA"/>
</dbReference>
<dbReference type="RefSeq" id="WP_003726839.1">
    <property type="nucleotide sequence ID" value="NC_002973.6"/>
</dbReference>
<dbReference type="SMR" id="Q724G1"/>
<dbReference type="KEGG" id="lmf:LMOf2365_0263"/>
<dbReference type="HOGENOM" id="CLU_086499_3_2_9"/>
<dbReference type="GO" id="GO:0022625">
    <property type="term" value="C:cytosolic large ribosomal subunit"/>
    <property type="evidence" value="ECO:0007669"/>
    <property type="project" value="TreeGrafter"/>
</dbReference>
<dbReference type="GO" id="GO:0003729">
    <property type="term" value="F:mRNA binding"/>
    <property type="evidence" value="ECO:0007669"/>
    <property type="project" value="TreeGrafter"/>
</dbReference>
<dbReference type="GO" id="GO:0003735">
    <property type="term" value="F:structural constituent of ribosome"/>
    <property type="evidence" value="ECO:0007669"/>
    <property type="project" value="InterPro"/>
</dbReference>
<dbReference type="GO" id="GO:0006412">
    <property type="term" value="P:translation"/>
    <property type="evidence" value="ECO:0007669"/>
    <property type="project" value="UniProtKB-UniRule"/>
</dbReference>
<dbReference type="CDD" id="cd00387">
    <property type="entry name" value="Ribosomal_L7_L12"/>
    <property type="match status" value="1"/>
</dbReference>
<dbReference type="FunFam" id="1.20.5.710:FF:000002">
    <property type="entry name" value="50S ribosomal protein L7/L12"/>
    <property type="match status" value="1"/>
</dbReference>
<dbReference type="FunFam" id="3.30.1390.10:FF:000001">
    <property type="entry name" value="50S ribosomal protein L7/L12"/>
    <property type="match status" value="1"/>
</dbReference>
<dbReference type="Gene3D" id="3.30.1390.10">
    <property type="match status" value="1"/>
</dbReference>
<dbReference type="Gene3D" id="1.20.5.710">
    <property type="entry name" value="Single helix bin"/>
    <property type="match status" value="1"/>
</dbReference>
<dbReference type="HAMAP" id="MF_00368">
    <property type="entry name" value="Ribosomal_bL12"/>
    <property type="match status" value="1"/>
</dbReference>
<dbReference type="InterPro" id="IPR000206">
    <property type="entry name" value="Ribosomal_bL12"/>
</dbReference>
<dbReference type="InterPro" id="IPR013823">
    <property type="entry name" value="Ribosomal_bL12_C"/>
</dbReference>
<dbReference type="InterPro" id="IPR014719">
    <property type="entry name" value="Ribosomal_bL12_C/ClpS-like"/>
</dbReference>
<dbReference type="InterPro" id="IPR008932">
    <property type="entry name" value="Ribosomal_bL12_oligo"/>
</dbReference>
<dbReference type="InterPro" id="IPR036235">
    <property type="entry name" value="Ribosomal_bL12_oligo_N_sf"/>
</dbReference>
<dbReference type="NCBIfam" id="TIGR00855">
    <property type="entry name" value="L12"/>
    <property type="match status" value="1"/>
</dbReference>
<dbReference type="PANTHER" id="PTHR45987">
    <property type="entry name" value="39S RIBOSOMAL PROTEIN L12"/>
    <property type="match status" value="1"/>
</dbReference>
<dbReference type="PANTHER" id="PTHR45987:SF4">
    <property type="entry name" value="LARGE RIBOSOMAL SUBUNIT PROTEIN BL12M"/>
    <property type="match status" value="1"/>
</dbReference>
<dbReference type="Pfam" id="PF00542">
    <property type="entry name" value="Ribosomal_L12"/>
    <property type="match status" value="1"/>
</dbReference>
<dbReference type="Pfam" id="PF16320">
    <property type="entry name" value="Ribosomal_L12_N"/>
    <property type="match status" value="1"/>
</dbReference>
<dbReference type="SUPFAM" id="SSF54736">
    <property type="entry name" value="ClpS-like"/>
    <property type="match status" value="1"/>
</dbReference>
<dbReference type="SUPFAM" id="SSF48300">
    <property type="entry name" value="Ribosomal protein L7/12, oligomerisation (N-terminal) domain"/>
    <property type="match status" value="1"/>
</dbReference>
<proteinExistence type="inferred from homology"/>